<comment type="function">
    <text>May function as a transcription factor.</text>
</comment>
<comment type="subunit">
    <text evidence="1">Component of the SSP (stage selector protein) complex, which appears to be a heteromer of TFCP2 and 2 copies of NFE4.</text>
</comment>
<comment type="subcellular location">
    <subcellularLocation>
        <location evidence="1">Nucleus</location>
    </subcellularLocation>
</comment>
<comment type="similarity">
    <text evidence="4">Belongs to the grh/CP2 family. CP2 subfamily.</text>
</comment>
<keyword id="KW-0238">DNA-binding</keyword>
<keyword id="KW-0539">Nucleus</keyword>
<keyword id="KW-1185">Reference proteome</keyword>
<keyword id="KW-0804">Transcription</keyword>
<keyword id="KW-0805">Transcription regulation</keyword>
<accession>Q4V860</accession>
<name>TFCP2_XENLA</name>
<evidence type="ECO:0000250" key="1"/>
<evidence type="ECO:0000255" key="2">
    <source>
        <dbReference type="PROSITE-ProRule" id="PRU01313"/>
    </source>
</evidence>
<evidence type="ECO:0000256" key="3">
    <source>
        <dbReference type="SAM" id="MobiDB-lite"/>
    </source>
</evidence>
<evidence type="ECO:0000305" key="4"/>
<proteinExistence type="evidence at transcript level"/>
<reference key="1">
    <citation type="submission" date="2005-06" db="EMBL/GenBank/DDBJ databases">
        <authorList>
            <consortium name="NIH - Xenopus Gene Collection (XGC) project"/>
        </authorList>
    </citation>
    <scope>NUCLEOTIDE SEQUENCE [LARGE SCALE MRNA]</scope>
    <source>
        <tissue>Embryo</tissue>
    </source>
</reference>
<feature type="chain" id="PRO_0000228004" description="Transcription factor CP2">
    <location>
        <begin position="1"/>
        <end position="506"/>
    </location>
</feature>
<feature type="domain" description="Grh/CP2 DB" evidence="2">
    <location>
        <begin position="61"/>
        <end position="300"/>
    </location>
</feature>
<feature type="region of interest" description="DNA-binding" evidence="1">
    <location>
        <begin position="133"/>
        <end position="395"/>
    </location>
</feature>
<feature type="region of interest" description="Disordered" evidence="3">
    <location>
        <begin position="238"/>
        <end position="268"/>
    </location>
</feature>
<feature type="region of interest" description="Disordered" evidence="3">
    <location>
        <begin position="291"/>
        <end position="316"/>
    </location>
</feature>
<feature type="compositionally biased region" description="Basic and acidic residues" evidence="3">
    <location>
        <begin position="241"/>
        <end position="265"/>
    </location>
</feature>
<feature type="compositionally biased region" description="Polar residues" evidence="3">
    <location>
        <begin position="291"/>
        <end position="300"/>
    </location>
</feature>
<organism>
    <name type="scientific">Xenopus laevis</name>
    <name type="common">African clawed frog</name>
    <dbReference type="NCBI Taxonomy" id="8355"/>
    <lineage>
        <taxon>Eukaryota</taxon>
        <taxon>Metazoa</taxon>
        <taxon>Chordata</taxon>
        <taxon>Craniata</taxon>
        <taxon>Vertebrata</taxon>
        <taxon>Euteleostomi</taxon>
        <taxon>Amphibia</taxon>
        <taxon>Batrachia</taxon>
        <taxon>Anura</taxon>
        <taxon>Pipoidea</taxon>
        <taxon>Pipidae</taxon>
        <taxon>Xenopodinae</taxon>
        <taxon>Xenopus</taxon>
        <taxon>Xenopus</taxon>
    </lineage>
</organism>
<dbReference type="EMBL" id="BC097529">
    <property type="protein sequence ID" value="AAH97529.1"/>
    <property type="molecule type" value="mRNA"/>
</dbReference>
<dbReference type="RefSeq" id="NP_001089447.1">
    <property type="nucleotide sequence ID" value="NM_001095978.1"/>
</dbReference>
<dbReference type="SMR" id="Q4V860"/>
<dbReference type="BioGRID" id="592278">
    <property type="interactions" value="2"/>
</dbReference>
<dbReference type="DNASU" id="734497"/>
<dbReference type="GeneID" id="734497"/>
<dbReference type="KEGG" id="xla:734497"/>
<dbReference type="AGR" id="Xenbase:XB-GENE-865546"/>
<dbReference type="CTD" id="734497"/>
<dbReference type="Xenbase" id="XB-GENE-865546">
    <property type="gene designation" value="tfcp2.L"/>
</dbReference>
<dbReference type="OMA" id="XNLLPTT"/>
<dbReference type="OrthoDB" id="9996779at2759"/>
<dbReference type="Proteomes" id="UP000186698">
    <property type="component" value="Chromosome 2L"/>
</dbReference>
<dbReference type="Bgee" id="734497">
    <property type="expression patterns" value="Expressed in neurula embryo and 19 other cell types or tissues"/>
</dbReference>
<dbReference type="GO" id="GO:0005634">
    <property type="term" value="C:nucleus"/>
    <property type="evidence" value="ECO:0000318"/>
    <property type="project" value="GO_Central"/>
</dbReference>
<dbReference type="GO" id="GO:0001228">
    <property type="term" value="F:DNA-binding transcription activator activity, RNA polymerase II-specific"/>
    <property type="evidence" value="ECO:0000318"/>
    <property type="project" value="GO_Central"/>
</dbReference>
<dbReference type="GO" id="GO:0000978">
    <property type="term" value="F:RNA polymerase II cis-regulatory region sequence-specific DNA binding"/>
    <property type="evidence" value="ECO:0000318"/>
    <property type="project" value="GO_Central"/>
</dbReference>
<dbReference type="GO" id="GO:0045944">
    <property type="term" value="P:positive regulation of transcription by RNA polymerase II"/>
    <property type="evidence" value="ECO:0000318"/>
    <property type="project" value="GO_Central"/>
</dbReference>
<dbReference type="CDD" id="cd09589">
    <property type="entry name" value="SAM_TFCP2"/>
    <property type="match status" value="1"/>
</dbReference>
<dbReference type="FunFam" id="1.10.150.50:FF:000022">
    <property type="entry name" value="Transcription factor CP2 like 1"/>
    <property type="match status" value="1"/>
</dbReference>
<dbReference type="Gene3D" id="1.10.150.50">
    <property type="entry name" value="Transcription Factor, Ets-1"/>
    <property type="match status" value="1"/>
</dbReference>
<dbReference type="InterPro" id="IPR007604">
    <property type="entry name" value="CP2"/>
</dbReference>
<dbReference type="InterPro" id="IPR013761">
    <property type="entry name" value="SAM/pointed_sf"/>
</dbReference>
<dbReference type="InterPro" id="IPR041418">
    <property type="entry name" value="SAM_3"/>
</dbReference>
<dbReference type="InterPro" id="IPR040167">
    <property type="entry name" value="TF_CP2-like"/>
</dbReference>
<dbReference type="InterPro" id="IPR037599">
    <property type="entry name" value="TFCP2_SAM"/>
</dbReference>
<dbReference type="PANTHER" id="PTHR11037:SF11">
    <property type="entry name" value="ALPHA-GLOBIN TRANSCRIPTION FACTOR CP2"/>
    <property type="match status" value="1"/>
</dbReference>
<dbReference type="PANTHER" id="PTHR11037">
    <property type="entry name" value="TRANSCRIPTION FACTOR CP2"/>
    <property type="match status" value="1"/>
</dbReference>
<dbReference type="Pfam" id="PF04516">
    <property type="entry name" value="CP2"/>
    <property type="match status" value="1"/>
</dbReference>
<dbReference type="Pfam" id="PF25416">
    <property type="entry name" value="GRHL1_C"/>
    <property type="match status" value="1"/>
</dbReference>
<dbReference type="Pfam" id="PF18016">
    <property type="entry name" value="SAM_3"/>
    <property type="match status" value="1"/>
</dbReference>
<dbReference type="SUPFAM" id="SSF47769">
    <property type="entry name" value="SAM/Pointed domain"/>
    <property type="match status" value="1"/>
</dbReference>
<dbReference type="PROSITE" id="PS51968">
    <property type="entry name" value="GRH_CP2_DB"/>
    <property type="match status" value="1"/>
</dbReference>
<sequence length="506" mass="57542">MAWALKLPLADEVIESGLVQDFDASLSGIGQELGAGAYSMSDVLALPIFKQEESSLPSENENKILPFQYVLCTATSPAVKLHEETLTYLNQGQSYEIRMLDNRKIGELPELNGKLVKSIFRVVFHDRRLQYTEHQQLEGWRWNRPGDRILDIDIPMSVGIIDPRANPTQLNTIEFLWDPAKRTSVFIQVHCISTEFTMRKHGGEKGVPFRVQIDTFKENENGEYTEHLHSASSQIKVFKPKGADRKQKTDREKMEKRTPQEKEKYQPSYETTILTECSPWPEITYVSNSPSPGFNSSHNSFPIGEGNGSPNHQPEPPAPIVDVSAGLTPIQNLMPTSTPQEAQQWLHRNRFAAFSRLFTNFSGADLLKLTREDVIQICGPADGIRLFNALKGRIVRPRLTIYVCQESQQLREQQQHKHENGEPGNGAFYVYHAIYLEEMTTIELTEKIAQLFSISPHQINQIYKQGPTGIHVLISDEMIQNFQDESCFILDTMKAETNDSYHIILK</sequence>
<gene>
    <name type="primary">tfcp2</name>
</gene>
<protein>
    <recommendedName>
        <fullName>Transcription factor CP2</fullName>
    </recommendedName>
</protein>